<proteinExistence type="inferred from homology"/>
<gene>
    <name evidence="1" type="primary">trpA</name>
    <name type="ordered locus">YPDSF_0930</name>
</gene>
<organism>
    <name type="scientific">Yersinia pestis (strain Pestoides F)</name>
    <dbReference type="NCBI Taxonomy" id="386656"/>
    <lineage>
        <taxon>Bacteria</taxon>
        <taxon>Pseudomonadati</taxon>
        <taxon>Pseudomonadota</taxon>
        <taxon>Gammaproteobacteria</taxon>
        <taxon>Enterobacterales</taxon>
        <taxon>Yersiniaceae</taxon>
        <taxon>Yersinia</taxon>
    </lineage>
</organism>
<evidence type="ECO:0000255" key="1">
    <source>
        <dbReference type="HAMAP-Rule" id="MF_00131"/>
    </source>
</evidence>
<keyword id="KW-0028">Amino-acid biosynthesis</keyword>
<keyword id="KW-0057">Aromatic amino acid biosynthesis</keyword>
<keyword id="KW-0456">Lyase</keyword>
<keyword id="KW-0822">Tryptophan biosynthesis</keyword>
<accession>A4TJ68</accession>
<feature type="chain" id="PRO_1000018313" description="Tryptophan synthase alpha chain">
    <location>
        <begin position="1"/>
        <end position="268"/>
    </location>
</feature>
<feature type="active site" description="Proton acceptor" evidence="1">
    <location>
        <position position="49"/>
    </location>
</feature>
<feature type="active site" description="Proton acceptor" evidence="1">
    <location>
        <position position="60"/>
    </location>
</feature>
<dbReference type="EC" id="4.2.1.20" evidence="1"/>
<dbReference type="EMBL" id="CP000668">
    <property type="protein sequence ID" value="ABP39330.1"/>
    <property type="molecule type" value="Genomic_DNA"/>
</dbReference>
<dbReference type="RefSeq" id="WP_002210634.1">
    <property type="nucleotide sequence ID" value="NZ_CP009715.1"/>
</dbReference>
<dbReference type="SMR" id="A4TJ68"/>
<dbReference type="GeneID" id="57976464"/>
<dbReference type="KEGG" id="ypp:YPDSF_0930"/>
<dbReference type="PATRIC" id="fig|386656.14.peg.2921"/>
<dbReference type="UniPathway" id="UPA00035">
    <property type="reaction ID" value="UER00044"/>
</dbReference>
<dbReference type="GO" id="GO:0005829">
    <property type="term" value="C:cytosol"/>
    <property type="evidence" value="ECO:0007669"/>
    <property type="project" value="TreeGrafter"/>
</dbReference>
<dbReference type="GO" id="GO:0004834">
    <property type="term" value="F:tryptophan synthase activity"/>
    <property type="evidence" value="ECO:0007669"/>
    <property type="project" value="UniProtKB-UniRule"/>
</dbReference>
<dbReference type="CDD" id="cd04724">
    <property type="entry name" value="Tryptophan_synthase_alpha"/>
    <property type="match status" value="1"/>
</dbReference>
<dbReference type="FunFam" id="3.20.20.70:FF:000037">
    <property type="entry name" value="Tryptophan synthase alpha chain"/>
    <property type="match status" value="1"/>
</dbReference>
<dbReference type="Gene3D" id="3.20.20.70">
    <property type="entry name" value="Aldolase class I"/>
    <property type="match status" value="1"/>
</dbReference>
<dbReference type="HAMAP" id="MF_00131">
    <property type="entry name" value="Trp_synth_alpha"/>
    <property type="match status" value="1"/>
</dbReference>
<dbReference type="InterPro" id="IPR013785">
    <property type="entry name" value="Aldolase_TIM"/>
</dbReference>
<dbReference type="InterPro" id="IPR011060">
    <property type="entry name" value="RibuloseP-bd_barrel"/>
</dbReference>
<dbReference type="InterPro" id="IPR018204">
    <property type="entry name" value="Trp_synthase_alpha_AS"/>
</dbReference>
<dbReference type="InterPro" id="IPR002028">
    <property type="entry name" value="Trp_synthase_suA"/>
</dbReference>
<dbReference type="NCBIfam" id="TIGR00262">
    <property type="entry name" value="trpA"/>
    <property type="match status" value="1"/>
</dbReference>
<dbReference type="PANTHER" id="PTHR43406:SF1">
    <property type="entry name" value="TRYPTOPHAN SYNTHASE ALPHA CHAIN, CHLOROPLASTIC"/>
    <property type="match status" value="1"/>
</dbReference>
<dbReference type="PANTHER" id="PTHR43406">
    <property type="entry name" value="TRYPTOPHAN SYNTHASE, ALPHA CHAIN"/>
    <property type="match status" value="1"/>
</dbReference>
<dbReference type="Pfam" id="PF00290">
    <property type="entry name" value="Trp_syntA"/>
    <property type="match status" value="1"/>
</dbReference>
<dbReference type="SUPFAM" id="SSF51366">
    <property type="entry name" value="Ribulose-phoshate binding barrel"/>
    <property type="match status" value="1"/>
</dbReference>
<dbReference type="PROSITE" id="PS00167">
    <property type="entry name" value="TRP_SYNTHASE_ALPHA"/>
    <property type="match status" value="1"/>
</dbReference>
<reference key="1">
    <citation type="submission" date="2007-02" db="EMBL/GenBank/DDBJ databases">
        <title>Complete sequence of chromosome of Yersinia pestis Pestoides F.</title>
        <authorList>
            <consortium name="US DOE Joint Genome Institute"/>
            <person name="Copeland A."/>
            <person name="Lucas S."/>
            <person name="Lapidus A."/>
            <person name="Barry K."/>
            <person name="Detter J.C."/>
            <person name="Glavina del Rio T."/>
            <person name="Hammon N."/>
            <person name="Israni S."/>
            <person name="Dalin E."/>
            <person name="Tice H."/>
            <person name="Pitluck S."/>
            <person name="Di Bartolo G."/>
            <person name="Chain P."/>
            <person name="Malfatti S."/>
            <person name="Shin M."/>
            <person name="Vergez L."/>
            <person name="Schmutz J."/>
            <person name="Larimer F."/>
            <person name="Land M."/>
            <person name="Hauser L."/>
            <person name="Worsham P."/>
            <person name="Chu M."/>
            <person name="Bearden S."/>
            <person name="Garcia E."/>
            <person name="Richardson P."/>
        </authorList>
    </citation>
    <scope>NUCLEOTIDE SEQUENCE [LARGE SCALE GENOMIC DNA]</scope>
    <source>
        <strain>Pestoides F</strain>
    </source>
</reference>
<sequence length="268" mass="28579">MERYQQLFKQLAAKKEGAFVPFVQLGDPSPAMSLNIIDTLIAAGADALELGIPFSDPLADGPTIQNAALRAFAAGVTPGICFEILAEIRQKHPTIPIGLLMYANLVFHNGIDHFYQRCAEVGVDSVLIADVPFEESAPFRAAALRHGIAPIFICPPNADDDLLREIASHGRGYTYLLSRAGVTGAENHGQLPLNHLVDKLREYNAAPALQGFGISEPAQVKASLAAGAAGAISGSAIVKIIEKNVAQPVEMLVQLTRFVTEMKAATRS</sequence>
<comment type="function">
    <text evidence="1">The alpha subunit is responsible for the aldol cleavage of indoleglycerol phosphate to indole and glyceraldehyde 3-phosphate.</text>
</comment>
<comment type="catalytic activity">
    <reaction evidence="1">
        <text>(1S,2R)-1-C-(indol-3-yl)glycerol 3-phosphate + L-serine = D-glyceraldehyde 3-phosphate + L-tryptophan + H2O</text>
        <dbReference type="Rhea" id="RHEA:10532"/>
        <dbReference type="ChEBI" id="CHEBI:15377"/>
        <dbReference type="ChEBI" id="CHEBI:33384"/>
        <dbReference type="ChEBI" id="CHEBI:57912"/>
        <dbReference type="ChEBI" id="CHEBI:58866"/>
        <dbReference type="ChEBI" id="CHEBI:59776"/>
        <dbReference type="EC" id="4.2.1.20"/>
    </reaction>
</comment>
<comment type="pathway">
    <text evidence="1">Amino-acid biosynthesis; L-tryptophan biosynthesis; L-tryptophan from chorismate: step 5/5.</text>
</comment>
<comment type="subunit">
    <text evidence="1">Tetramer of two alpha and two beta chains.</text>
</comment>
<comment type="similarity">
    <text evidence="1">Belongs to the TrpA family.</text>
</comment>
<name>TRPA_YERPP</name>
<protein>
    <recommendedName>
        <fullName evidence="1">Tryptophan synthase alpha chain</fullName>
        <ecNumber evidence="1">4.2.1.20</ecNumber>
    </recommendedName>
</protein>